<feature type="chain" id="PRO_0000305673" description="Phosphoglucosamine mutase 2">
    <location>
        <begin position="1"/>
        <end position="450"/>
    </location>
</feature>
<feature type="active site" description="Phosphoserine intermediate" evidence="1">
    <location>
        <position position="101"/>
    </location>
</feature>
<feature type="binding site" description="via phosphate group" evidence="1">
    <location>
        <position position="101"/>
    </location>
    <ligand>
        <name>Mg(2+)</name>
        <dbReference type="ChEBI" id="CHEBI:18420"/>
    </ligand>
</feature>
<feature type="binding site" evidence="1">
    <location>
        <position position="245"/>
    </location>
    <ligand>
        <name>Mg(2+)</name>
        <dbReference type="ChEBI" id="CHEBI:18420"/>
    </ligand>
</feature>
<feature type="binding site" evidence="1">
    <location>
        <position position="247"/>
    </location>
    <ligand>
        <name>Mg(2+)</name>
        <dbReference type="ChEBI" id="CHEBI:18420"/>
    </ligand>
</feature>
<feature type="binding site" evidence="1">
    <location>
        <position position="249"/>
    </location>
    <ligand>
        <name>Mg(2+)</name>
        <dbReference type="ChEBI" id="CHEBI:18420"/>
    </ligand>
</feature>
<feature type="modified residue" description="Phosphoserine" evidence="1">
    <location>
        <position position="101"/>
    </location>
</feature>
<dbReference type="EC" id="5.4.2.10" evidence="1"/>
<dbReference type="EMBL" id="CP000447">
    <property type="protein sequence ID" value="ABI72661.1"/>
    <property type="molecule type" value="Genomic_DNA"/>
</dbReference>
<dbReference type="RefSeq" id="WP_011638270.1">
    <property type="nucleotide sequence ID" value="NC_008345.1"/>
</dbReference>
<dbReference type="SMR" id="Q07ZA3"/>
<dbReference type="STRING" id="318167.Sfri_2822"/>
<dbReference type="KEGG" id="sfr:Sfri_2822"/>
<dbReference type="eggNOG" id="COG1109">
    <property type="taxonomic scope" value="Bacteria"/>
</dbReference>
<dbReference type="HOGENOM" id="CLU_016950_7_0_6"/>
<dbReference type="OrthoDB" id="9803322at2"/>
<dbReference type="Proteomes" id="UP000000684">
    <property type="component" value="Chromosome"/>
</dbReference>
<dbReference type="GO" id="GO:0005829">
    <property type="term" value="C:cytosol"/>
    <property type="evidence" value="ECO:0007669"/>
    <property type="project" value="TreeGrafter"/>
</dbReference>
<dbReference type="GO" id="GO:0000287">
    <property type="term" value="F:magnesium ion binding"/>
    <property type="evidence" value="ECO:0007669"/>
    <property type="project" value="UniProtKB-UniRule"/>
</dbReference>
<dbReference type="GO" id="GO:0008966">
    <property type="term" value="F:phosphoglucosamine mutase activity"/>
    <property type="evidence" value="ECO:0007669"/>
    <property type="project" value="UniProtKB-UniRule"/>
</dbReference>
<dbReference type="GO" id="GO:0004615">
    <property type="term" value="F:phosphomannomutase activity"/>
    <property type="evidence" value="ECO:0007669"/>
    <property type="project" value="TreeGrafter"/>
</dbReference>
<dbReference type="GO" id="GO:0005975">
    <property type="term" value="P:carbohydrate metabolic process"/>
    <property type="evidence" value="ECO:0007669"/>
    <property type="project" value="InterPro"/>
</dbReference>
<dbReference type="GO" id="GO:0009252">
    <property type="term" value="P:peptidoglycan biosynthetic process"/>
    <property type="evidence" value="ECO:0007669"/>
    <property type="project" value="TreeGrafter"/>
</dbReference>
<dbReference type="GO" id="GO:0006048">
    <property type="term" value="P:UDP-N-acetylglucosamine biosynthetic process"/>
    <property type="evidence" value="ECO:0007669"/>
    <property type="project" value="TreeGrafter"/>
</dbReference>
<dbReference type="CDD" id="cd05802">
    <property type="entry name" value="GlmM"/>
    <property type="match status" value="1"/>
</dbReference>
<dbReference type="FunFam" id="3.30.310.50:FF:000001">
    <property type="entry name" value="Phosphoglucosamine mutase"/>
    <property type="match status" value="1"/>
</dbReference>
<dbReference type="FunFam" id="3.40.120.10:FF:000001">
    <property type="entry name" value="Phosphoglucosamine mutase"/>
    <property type="match status" value="1"/>
</dbReference>
<dbReference type="FunFam" id="3.40.120.10:FF:000003">
    <property type="entry name" value="Phosphoglucosamine mutase"/>
    <property type="match status" value="1"/>
</dbReference>
<dbReference type="Gene3D" id="3.40.120.10">
    <property type="entry name" value="Alpha-D-Glucose-1,6-Bisphosphate, subunit A, domain 3"/>
    <property type="match status" value="3"/>
</dbReference>
<dbReference type="Gene3D" id="3.30.310.50">
    <property type="entry name" value="Alpha-D-phosphohexomutase, C-terminal domain"/>
    <property type="match status" value="1"/>
</dbReference>
<dbReference type="HAMAP" id="MF_01554_B">
    <property type="entry name" value="GlmM_B"/>
    <property type="match status" value="1"/>
</dbReference>
<dbReference type="InterPro" id="IPR005844">
    <property type="entry name" value="A-D-PHexomutase_a/b/a-I"/>
</dbReference>
<dbReference type="InterPro" id="IPR016055">
    <property type="entry name" value="A-D-PHexomutase_a/b/a-I/II/III"/>
</dbReference>
<dbReference type="InterPro" id="IPR005845">
    <property type="entry name" value="A-D-PHexomutase_a/b/a-II"/>
</dbReference>
<dbReference type="InterPro" id="IPR005846">
    <property type="entry name" value="A-D-PHexomutase_a/b/a-III"/>
</dbReference>
<dbReference type="InterPro" id="IPR005843">
    <property type="entry name" value="A-D-PHexomutase_C"/>
</dbReference>
<dbReference type="InterPro" id="IPR036900">
    <property type="entry name" value="A-D-PHexomutase_C_sf"/>
</dbReference>
<dbReference type="InterPro" id="IPR016066">
    <property type="entry name" value="A-D-PHexomutase_CS"/>
</dbReference>
<dbReference type="InterPro" id="IPR005841">
    <property type="entry name" value="Alpha-D-phosphohexomutase_SF"/>
</dbReference>
<dbReference type="InterPro" id="IPR006352">
    <property type="entry name" value="GlmM_bact"/>
</dbReference>
<dbReference type="InterPro" id="IPR050060">
    <property type="entry name" value="Phosphoglucosamine_mutase"/>
</dbReference>
<dbReference type="NCBIfam" id="TIGR01455">
    <property type="entry name" value="glmM"/>
    <property type="match status" value="1"/>
</dbReference>
<dbReference type="NCBIfam" id="NF008139">
    <property type="entry name" value="PRK10887.1"/>
    <property type="match status" value="1"/>
</dbReference>
<dbReference type="PANTHER" id="PTHR42946:SF1">
    <property type="entry name" value="PHOSPHOGLUCOMUTASE (ALPHA-D-GLUCOSE-1,6-BISPHOSPHATE-DEPENDENT)"/>
    <property type="match status" value="1"/>
</dbReference>
<dbReference type="PANTHER" id="PTHR42946">
    <property type="entry name" value="PHOSPHOHEXOSE MUTASE"/>
    <property type="match status" value="1"/>
</dbReference>
<dbReference type="Pfam" id="PF02878">
    <property type="entry name" value="PGM_PMM_I"/>
    <property type="match status" value="1"/>
</dbReference>
<dbReference type="Pfam" id="PF02879">
    <property type="entry name" value="PGM_PMM_II"/>
    <property type="match status" value="1"/>
</dbReference>
<dbReference type="Pfam" id="PF02880">
    <property type="entry name" value="PGM_PMM_III"/>
    <property type="match status" value="1"/>
</dbReference>
<dbReference type="Pfam" id="PF00408">
    <property type="entry name" value="PGM_PMM_IV"/>
    <property type="match status" value="1"/>
</dbReference>
<dbReference type="PRINTS" id="PR00509">
    <property type="entry name" value="PGMPMM"/>
</dbReference>
<dbReference type="SUPFAM" id="SSF55957">
    <property type="entry name" value="Phosphoglucomutase, C-terminal domain"/>
    <property type="match status" value="1"/>
</dbReference>
<dbReference type="SUPFAM" id="SSF53738">
    <property type="entry name" value="Phosphoglucomutase, first 3 domains"/>
    <property type="match status" value="3"/>
</dbReference>
<dbReference type="PROSITE" id="PS00710">
    <property type="entry name" value="PGM_PMM"/>
    <property type="match status" value="1"/>
</dbReference>
<evidence type="ECO:0000255" key="1">
    <source>
        <dbReference type="HAMAP-Rule" id="MF_01554"/>
    </source>
</evidence>
<gene>
    <name evidence="1" type="primary">glmM2</name>
    <name type="ordered locus">Sfri_2822</name>
</gene>
<protein>
    <recommendedName>
        <fullName evidence="1">Phosphoglucosamine mutase 2</fullName>
        <ecNumber evidence="1">5.4.2.10</ecNumber>
    </recommendedName>
</protein>
<sequence>MSRKYFGTDGVRGRVGTFPITPDFAMKLGWAAGKVLASTGTQEVLIGKDTRSSGYMLESAIEAGLSAAGVNVALIGPMPTPAVAYLASTFRADAGVVISASHNPFYDNGIKFFSNSGTKLNDQQELEIEALLDQALNHNAMECVSSELLGKVRRITDAAGRYIEFCKGVFAKDLTLAGLKIVVDSANGAAYHIAPNVYRELGAEVISINDKPNGTNINDHCGATHLDSLQTAVMVHEADLGIAMDGDADRVMFVDHNGHVVDGDQILYILAKSAKQQGTMTGGVVGTLMSNLGLEIALKEMDIPFKRAKVGDRYVVEQLKQTGWRIGGEGSGHILHLDHASTGDAVVASLLVLQAVLQSGQSLAEIVSCMKKLPQVLLNVRLTANNADEILASAAVKQAVIEAEAVLAENGRVLLRKSGTEPLIRVMVESTDPEMSQAQAEHIAKVVTSF</sequence>
<name>GLMM2_SHEFN</name>
<reference key="1">
    <citation type="submission" date="2006-08" db="EMBL/GenBank/DDBJ databases">
        <title>Complete sequence of Shewanella frigidimarina NCIMB 400.</title>
        <authorList>
            <consortium name="US DOE Joint Genome Institute"/>
            <person name="Copeland A."/>
            <person name="Lucas S."/>
            <person name="Lapidus A."/>
            <person name="Barry K."/>
            <person name="Detter J.C."/>
            <person name="Glavina del Rio T."/>
            <person name="Hammon N."/>
            <person name="Israni S."/>
            <person name="Dalin E."/>
            <person name="Tice H."/>
            <person name="Pitluck S."/>
            <person name="Fredrickson J.K."/>
            <person name="Kolker E."/>
            <person name="McCuel L.A."/>
            <person name="DiChristina T."/>
            <person name="Nealson K.H."/>
            <person name="Newman D."/>
            <person name="Tiedje J.M."/>
            <person name="Zhou J."/>
            <person name="Romine M.F."/>
            <person name="Culley D.E."/>
            <person name="Serres M."/>
            <person name="Chertkov O."/>
            <person name="Brettin T."/>
            <person name="Bruce D."/>
            <person name="Han C."/>
            <person name="Tapia R."/>
            <person name="Gilna P."/>
            <person name="Schmutz J."/>
            <person name="Larimer F."/>
            <person name="Land M."/>
            <person name="Hauser L."/>
            <person name="Kyrpides N."/>
            <person name="Mikhailova N."/>
            <person name="Richardson P."/>
        </authorList>
    </citation>
    <scope>NUCLEOTIDE SEQUENCE [LARGE SCALE GENOMIC DNA]</scope>
    <source>
        <strain>NCIMB 400</strain>
    </source>
</reference>
<keyword id="KW-0413">Isomerase</keyword>
<keyword id="KW-0460">Magnesium</keyword>
<keyword id="KW-0479">Metal-binding</keyword>
<keyword id="KW-0597">Phosphoprotein</keyword>
<keyword id="KW-1185">Reference proteome</keyword>
<accession>Q07ZA3</accession>
<proteinExistence type="inferred from homology"/>
<comment type="function">
    <text evidence="1">Catalyzes the conversion of glucosamine-6-phosphate to glucosamine-1-phosphate.</text>
</comment>
<comment type="catalytic activity">
    <reaction evidence="1">
        <text>alpha-D-glucosamine 1-phosphate = D-glucosamine 6-phosphate</text>
        <dbReference type="Rhea" id="RHEA:23424"/>
        <dbReference type="ChEBI" id="CHEBI:58516"/>
        <dbReference type="ChEBI" id="CHEBI:58725"/>
        <dbReference type="EC" id="5.4.2.10"/>
    </reaction>
</comment>
<comment type="cofactor">
    <cofactor evidence="1">
        <name>Mg(2+)</name>
        <dbReference type="ChEBI" id="CHEBI:18420"/>
    </cofactor>
    <text evidence="1">Binds 1 Mg(2+) ion per subunit.</text>
</comment>
<comment type="PTM">
    <text evidence="1">Activated by phosphorylation.</text>
</comment>
<comment type="similarity">
    <text evidence="1">Belongs to the phosphohexose mutase family.</text>
</comment>
<organism>
    <name type="scientific">Shewanella frigidimarina (strain NCIMB 400)</name>
    <dbReference type="NCBI Taxonomy" id="318167"/>
    <lineage>
        <taxon>Bacteria</taxon>
        <taxon>Pseudomonadati</taxon>
        <taxon>Pseudomonadota</taxon>
        <taxon>Gammaproteobacteria</taxon>
        <taxon>Alteromonadales</taxon>
        <taxon>Shewanellaceae</taxon>
        <taxon>Shewanella</taxon>
    </lineage>
</organism>